<protein>
    <recommendedName>
        <fullName>Guanine nucleotide exchange factor LTE1</fullName>
    </recommendedName>
</protein>
<dbReference type="EMBL" id="CR380953">
    <property type="protein sequence ID" value="CAG59559.1"/>
    <property type="molecule type" value="Genomic_DNA"/>
</dbReference>
<dbReference type="RefSeq" id="XP_446632.1">
    <property type="nucleotide sequence ID" value="XM_446632.1"/>
</dbReference>
<dbReference type="SMR" id="Q6FT12"/>
<dbReference type="FunCoup" id="Q6FT12">
    <property type="interactions" value="257"/>
</dbReference>
<dbReference type="STRING" id="284593.Q6FT12"/>
<dbReference type="EnsemblFungi" id="CAGL0G06226g-T">
    <property type="protein sequence ID" value="CAGL0G06226g-T-p1"/>
    <property type="gene ID" value="CAGL0G06226g"/>
</dbReference>
<dbReference type="KEGG" id="cgr:2888077"/>
<dbReference type="CGD" id="CAL0129973">
    <property type="gene designation" value="CAGL0G06226g"/>
</dbReference>
<dbReference type="VEuPathDB" id="FungiDB:CAGL0G06226g"/>
<dbReference type="eggNOG" id="KOG3417">
    <property type="taxonomic scope" value="Eukaryota"/>
</dbReference>
<dbReference type="HOGENOM" id="CLU_004883_0_0_1"/>
<dbReference type="InParanoid" id="Q6FT12"/>
<dbReference type="Proteomes" id="UP000002428">
    <property type="component" value="Chromosome G"/>
</dbReference>
<dbReference type="GO" id="GO:0005933">
    <property type="term" value="C:cellular bud"/>
    <property type="evidence" value="ECO:0007669"/>
    <property type="project" value="UniProtKB-SubCell"/>
</dbReference>
<dbReference type="GO" id="GO:0005737">
    <property type="term" value="C:cytoplasm"/>
    <property type="evidence" value="ECO:0007669"/>
    <property type="project" value="UniProtKB-SubCell"/>
</dbReference>
<dbReference type="GO" id="GO:0005886">
    <property type="term" value="C:plasma membrane"/>
    <property type="evidence" value="ECO:0007669"/>
    <property type="project" value="TreeGrafter"/>
</dbReference>
<dbReference type="GO" id="GO:0005085">
    <property type="term" value="F:guanyl-nucleotide exchange factor activity"/>
    <property type="evidence" value="ECO:0007669"/>
    <property type="project" value="UniProtKB-KW"/>
</dbReference>
<dbReference type="GO" id="GO:0061510">
    <property type="term" value="P:asymmetric protein localization to new mitotic spindle pole body"/>
    <property type="evidence" value="ECO:0007669"/>
    <property type="project" value="EnsemblFungi"/>
</dbReference>
<dbReference type="GO" id="GO:0051301">
    <property type="term" value="P:cell division"/>
    <property type="evidence" value="ECO:0007669"/>
    <property type="project" value="UniProtKB-KW"/>
</dbReference>
<dbReference type="GO" id="GO:0031536">
    <property type="term" value="P:positive regulation of exit from mitosis"/>
    <property type="evidence" value="ECO:0007669"/>
    <property type="project" value="EnsemblFungi"/>
</dbReference>
<dbReference type="GO" id="GO:0007265">
    <property type="term" value="P:Ras protein signal transduction"/>
    <property type="evidence" value="ECO:0007669"/>
    <property type="project" value="TreeGrafter"/>
</dbReference>
<dbReference type="GO" id="GO:0016192">
    <property type="term" value="P:vesicle-mediated transport"/>
    <property type="evidence" value="ECO:0007669"/>
    <property type="project" value="EnsemblFungi"/>
</dbReference>
<dbReference type="CDD" id="cd00155">
    <property type="entry name" value="RasGEF"/>
    <property type="match status" value="1"/>
</dbReference>
<dbReference type="CDD" id="cd06224">
    <property type="entry name" value="REM"/>
    <property type="match status" value="1"/>
</dbReference>
<dbReference type="FunFam" id="1.10.840.10:FF:000019">
    <property type="entry name" value="Guanine nucleotide exchange factor LTE1"/>
    <property type="match status" value="1"/>
</dbReference>
<dbReference type="Gene3D" id="1.10.840.10">
    <property type="entry name" value="Ras guanine-nucleotide exchange factors catalytic domain"/>
    <property type="match status" value="1"/>
</dbReference>
<dbReference type="Gene3D" id="1.20.870.10">
    <property type="entry name" value="Son of sevenless (SoS) protein Chain: S domain 1"/>
    <property type="match status" value="1"/>
</dbReference>
<dbReference type="InterPro" id="IPR008937">
    <property type="entry name" value="Ras-like_GEF"/>
</dbReference>
<dbReference type="InterPro" id="IPR000651">
    <property type="entry name" value="Ras-like_Gua-exchang_fac_N"/>
</dbReference>
<dbReference type="InterPro" id="IPR019804">
    <property type="entry name" value="Ras_G-nucl-exch_fac_CS"/>
</dbReference>
<dbReference type="InterPro" id="IPR023578">
    <property type="entry name" value="Ras_GEF_dom_sf"/>
</dbReference>
<dbReference type="InterPro" id="IPR001895">
    <property type="entry name" value="RASGEF_cat_dom"/>
</dbReference>
<dbReference type="InterPro" id="IPR036964">
    <property type="entry name" value="RASGEF_cat_dom_sf"/>
</dbReference>
<dbReference type="PANTHER" id="PTHR23113">
    <property type="entry name" value="GUANINE NUCLEOTIDE EXCHANGE FACTOR"/>
    <property type="match status" value="1"/>
</dbReference>
<dbReference type="PANTHER" id="PTHR23113:SF363">
    <property type="entry name" value="PROTEIN SON OF SEVENLESS"/>
    <property type="match status" value="1"/>
</dbReference>
<dbReference type="Pfam" id="PF00617">
    <property type="entry name" value="RasGEF"/>
    <property type="match status" value="1"/>
</dbReference>
<dbReference type="Pfam" id="PF00618">
    <property type="entry name" value="RasGEF_N"/>
    <property type="match status" value="1"/>
</dbReference>
<dbReference type="SMART" id="SM00147">
    <property type="entry name" value="RasGEF"/>
    <property type="match status" value="1"/>
</dbReference>
<dbReference type="SMART" id="SM00229">
    <property type="entry name" value="RasGEFN"/>
    <property type="match status" value="1"/>
</dbReference>
<dbReference type="SUPFAM" id="SSF48366">
    <property type="entry name" value="Ras GEF"/>
    <property type="match status" value="1"/>
</dbReference>
<dbReference type="PROSITE" id="PS00720">
    <property type="entry name" value="RASGEF"/>
    <property type="match status" value="1"/>
</dbReference>
<dbReference type="PROSITE" id="PS50009">
    <property type="entry name" value="RASGEF_CAT"/>
    <property type="match status" value="1"/>
</dbReference>
<dbReference type="PROSITE" id="PS50212">
    <property type="entry name" value="RASGEF_NTER"/>
    <property type="match status" value="1"/>
</dbReference>
<keyword id="KW-0131">Cell cycle</keyword>
<keyword id="KW-0132">Cell division</keyword>
<keyword id="KW-0963">Cytoplasm</keyword>
<keyword id="KW-0344">Guanine-nucleotide releasing factor</keyword>
<keyword id="KW-0498">Mitosis</keyword>
<keyword id="KW-1185">Reference proteome</keyword>
<organism>
    <name type="scientific">Candida glabrata (strain ATCC 2001 / BCRC 20586 / JCM 3761 / NBRC 0622 / NRRL Y-65 / CBS 138)</name>
    <name type="common">Yeast</name>
    <name type="synonym">Nakaseomyces glabratus</name>
    <dbReference type="NCBI Taxonomy" id="284593"/>
    <lineage>
        <taxon>Eukaryota</taxon>
        <taxon>Fungi</taxon>
        <taxon>Dikarya</taxon>
        <taxon>Ascomycota</taxon>
        <taxon>Saccharomycotina</taxon>
        <taxon>Saccharomycetes</taxon>
        <taxon>Saccharomycetales</taxon>
        <taxon>Saccharomycetaceae</taxon>
        <taxon>Nakaseomyces</taxon>
    </lineage>
</organism>
<proteinExistence type="inferred from homology"/>
<gene>
    <name type="primary">LTE1</name>
    <name type="ordered locus">CAGL0G06226g</name>
</gene>
<comment type="function">
    <text evidence="1">GDP-GTP exchange factor component of the mitotic exit network (MEN). Fine-tunes the timing of the mitotic exit and couples this event with cytokinesis. May also be involved in proprotein-processing in the secretory pathway (By similarity).</text>
</comment>
<comment type="subcellular location">
    <subcellularLocation>
        <location evidence="1">Cytoplasm</location>
    </subcellularLocation>
    <subcellularLocation>
        <location evidence="1">Bud</location>
    </subcellularLocation>
</comment>
<comment type="similarity">
    <text evidence="5">Belongs to the LTE1 family.</text>
</comment>
<name>LTE1_CANGA</name>
<evidence type="ECO:0000250" key="1"/>
<evidence type="ECO:0000255" key="2">
    <source>
        <dbReference type="PROSITE-ProRule" id="PRU00135"/>
    </source>
</evidence>
<evidence type="ECO:0000255" key="3">
    <source>
        <dbReference type="PROSITE-ProRule" id="PRU00168"/>
    </source>
</evidence>
<evidence type="ECO:0000256" key="4">
    <source>
        <dbReference type="SAM" id="MobiDB-lite"/>
    </source>
</evidence>
<evidence type="ECO:0000305" key="5"/>
<reference key="1">
    <citation type="journal article" date="2004" name="Nature">
        <title>Genome evolution in yeasts.</title>
        <authorList>
            <person name="Dujon B."/>
            <person name="Sherman D."/>
            <person name="Fischer G."/>
            <person name="Durrens P."/>
            <person name="Casaregola S."/>
            <person name="Lafontaine I."/>
            <person name="de Montigny J."/>
            <person name="Marck C."/>
            <person name="Neuveglise C."/>
            <person name="Talla E."/>
            <person name="Goffard N."/>
            <person name="Frangeul L."/>
            <person name="Aigle M."/>
            <person name="Anthouard V."/>
            <person name="Babour A."/>
            <person name="Barbe V."/>
            <person name="Barnay S."/>
            <person name="Blanchin S."/>
            <person name="Beckerich J.-M."/>
            <person name="Beyne E."/>
            <person name="Bleykasten C."/>
            <person name="Boisrame A."/>
            <person name="Boyer J."/>
            <person name="Cattolico L."/>
            <person name="Confanioleri F."/>
            <person name="de Daruvar A."/>
            <person name="Despons L."/>
            <person name="Fabre E."/>
            <person name="Fairhead C."/>
            <person name="Ferry-Dumazet H."/>
            <person name="Groppi A."/>
            <person name="Hantraye F."/>
            <person name="Hennequin C."/>
            <person name="Jauniaux N."/>
            <person name="Joyet P."/>
            <person name="Kachouri R."/>
            <person name="Kerrest A."/>
            <person name="Koszul R."/>
            <person name="Lemaire M."/>
            <person name="Lesur I."/>
            <person name="Ma L."/>
            <person name="Muller H."/>
            <person name="Nicaud J.-M."/>
            <person name="Nikolski M."/>
            <person name="Oztas S."/>
            <person name="Ozier-Kalogeropoulos O."/>
            <person name="Pellenz S."/>
            <person name="Potier S."/>
            <person name="Richard G.-F."/>
            <person name="Straub M.-L."/>
            <person name="Suleau A."/>
            <person name="Swennen D."/>
            <person name="Tekaia F."/>
            <person name="Wesolowski-Louvel M."/>
            <person name="Westhof E."/>
            <person name="Wirth B."/>
            <person name="Zeniou-Meyer M."/>
            <person name="Zivanovic Y."/>
            <person name="Bolotin-Fukuhara M."/>
            <person name="Thierry A."/>
            <person name="Bouchier C."/>
            <person name="Caudron B."/>
            <person name="Scarpelli C."/>
            <person name="Gaillardin C."/>
            <person name="Weissenbach J."/>
            <person name="Wincker P."/>
            <person name="Souciet J.-L."/>
        </authorList>
    </citation>
    <scope>NUCLEOTIDE SEQUENCE [LARGE SCALE GENOMIC DNA]</scope>
    <source>
        <strain>ATCC 2001 / BCRC 20586 / JCM 3761 / NBRC 0622 / NRRL Y-65 / CBS 138</strain>
    </source>
</reference>
<feature type="chain" id="PRO_0000285405" description="Guanine nucleotide exchange factor LTE1">
    <location>
        <begin position="1"/>
        <end position="1318"/>
    </location>
</feature>
<feature type="domain" description="N-terminal Ras-GEF" evidence="2">
    <location>
        <begin position="29"/>
        <end position="164"/>
    </location>
</feature>
<feature type="domain" description="Ras-GEF" evidence="3">
    <location>
        <begin position="1073"/>
        <end position="1314"/>
    </location>
</feature>
<feature type="region of interest" description="Disordered" evidence="4">
    <location>
        <begin position="694"/>
        <end position="718"/>
    </location>
</feature>
<feature type="region of interest" description="Disordered" evidence="4">
    <location>
        <begin position="842"/>
        <end position="861"/>
    </location>
</feature>
<feature type="compositionally biased region" description="Polar residues" evidence="4">
    <location>
        <begin position="844"/>
        <end position="861"/>
    </location>
</feature>
<accession>Q6FT12</accession>
<sequence length="1318" mass="150362">MDIFSQRDYYPIPSDDVIKYKHMVHKKWNKNEVIQADIPSIIVHLSSPVDSVDYKGFSDFFLFYRNFLTPAELYDYLILRFKWCMREIESYQHQRSGDNQLRIGKVALIRTFVLLRHGILNHFADDFLLNENLRLRLISFFNEDIKSDMKVIVSCLISLKKAWLHAMKLNWDNVLFNEPAFSAYTDWIDYKIKDVSQLDMAQKRNSRFSYHGIQSISNPDMRNRSILSIYKSDNFDHMVQSNSNKISRNRTPSTLLFQKDSSNSEMATVYSNRKGAQKKTIALPNILTSELDRKDVMSNVTRMSHIIQDAKTLRSSDVNKIIPSTPAKKVELILNTIYSPDCLESENIQESLNQDTSSTQKSFPKGIMSLLARWKKNHKIADPKIRKPVGFTNKREAELDNFVKYVISISSLTNKEEDLKRLNENLDSKFDILSARTIDEVEYLFRLESKLLAQLSTMQKTTRTLSNDEFNDVNVPNNIDSKQISAMDNLDLFRTVNGVARSVISLTNSVNKLNNLSDHSVLDRRRVKSSMPNFYNRERSLSGLSNYAGLQFYDASSEMSAEDDKPQKLVFHDGVDELKNHLTQTFTKPGSISNSSPLKKVLPNLFEHPSVDSLASGDACSYVTYDSQLSQMGTVKKSMKDETSRYSNYEGPVLKKKVAYDNLREFTFEDSKEIIKNDTSSLIDILNSPVTPDLSILPQTPTGKGSVQHKKKEKSESIISPASGRISIAKSHHMSLSPNLTKLKEDDEYVKGDNSLGQAEDELIRLEKNLRDSKLENYNTVVAGNLGAGSGSSTPLGDSPTNVFELPSSINMVESDMDTESFESSFEQRQPTNLREQYFKSIGSPETASPRKVNSNNAYSQVSSQMSPSLANKYLFSPDNESLDIASPVKNVEDLKSRFLKGNNQSASSSQIGASINTSVTATPKNNDMFGSDFDKNGLKNIMTASEEKLSKDPVELAMMKLEGTFKKNKSGNNTGYSSDLEKEVDILNIANLPEMNANPSDKRKSLMLDRRRQTMFNIGPSIYPSNTNDEGYDEESITDDKIWSLIAQYHIDDENLLAKNHANHVPFILMYESKDVAQQFTLIEREILSEIDWKDLLDIKLLYKGPNLTSWLQLLIQNQEFTGIDLAVARFNLTVDWAISEIVLTTDLKMRRNTIERFIHVAEHCRKLQNFNTMMQIILALNSVVVQKFTEAWRLIEPGDMLLWEDLRKIPALDWNYHALRTMMKTVDPLKGCIPFIVVYLSDLTINSEKNTWIVEKRVVNYSKFSTCVQIVKNFIQKVQWSSFYDIIPIQELLSKCIYISSLSQDEIEHLTAEFAR</sequence>